<dbReference type="EC" id="2.6.1.9" evidence="1"/>
<dbReference type="EMBL" id="CP000142">
    <property type="protein sequence ID" value="ABA87581.1"/>
    <property type="molecule type" value="Genomic_DNA"/>
</dbReference>
<dbReference type="RefSeq" id="WP_011339993.1">
    <property type="nucleotide sequence ID" value="NC_007498.2"/>
</dbReference>
<dbReference type="SMR" id="Q3A7R3"/>
<dbReference type="STRING" id="338963.Pcar_0321"/>
<dbReference type="KEGG" id="pca:Pcar_0321"/>
<dbReference type="eggNOG" id="COG0079">
    <property type="taxonomic scope" value="Bacteria"/>
</dbReference>
<dbReference type="HOGENOM" id="CLU_017584_3_0_7"/>
<dbReference type="OrthoDB" id="9813612at2"/>
<dbReference type="UniPathway" id="UPA00031">
    <property type="reaction ID" value="UER00012"/>
</dbReference>
<dbReference type="Proteomes" id="UP000002534">
    <property type="component" value="Chromosome"/>
</dbReference>
<dbReference type="GO" id="GO:0004400">
    <property type="term" value="F:histidinol-phosphate transaminase activity"/>
    <property type="evidence" value="ECO:0007669"/>
    <property type="project" value="UniProtKB-UniRule"/>
</dbReference>
<dbReference type="GO" id="GO:0030170">
    <property type="term" value="F:pyridoxal phosphate binding"/>
    <property type="evidence" value="ECO:0007669"/>
    <property type="project" value="InterPro"/>
</dbReference>
<dbReference type="GO" id="GO:0000105">
    <property type="term" value="P:L-histidine biosynthetic process"/>
    <property type="evidence" value="ECO:0007669"/>
    <property type="project" value="UniProtKB-UniRule"/>
</dbReference>
<dbReference type="CDD" id="cd00609">
    <property type="entry name" value="AAT_like"/>
    <property type="match status" value="1"/>
</dbReference>
<dbReference type="Gene3D" id="3.90.1150.10">
    <property type="entry name" value="Aspartate Aminotransferase, domain 1"/>
    <property type="match status" value="1"/>
</dbReference>
<dbReference type="Gene3D" id="3.40.640.10">
    <property type="entry name" value="Type I PLP-dependent aspartate aminotransferase-like (Major domain)"/>
    <property type="match status" value="1"/>
</dbReference>
<dbReference type="HAMAP" id="MF_01023">
    <property type="entry name" value="HisC_aminotrans_2"/>
    <property type="match status" value="1"/>
</dbReference>
<dbReference type="InterPro" id="IPR001917">
    <property type="entry name" value="Aminotrans_II_pyridoxalP_BS"/>
</dbReference>
<dbReference type="InterPro" id="IPR004839">
    <property type="entry name" value="Aminotransferase_I/II_large"/>
</dbReference>
<dbReference type="InterPro" id="IPR005861">
    <property type="entry name" value="HisP_aminotrans"/>
</dbReference>
<dbReference type="InterPro" id="IPR050106">
    <property type="entry name" value="HistidinolP_aminotransfase"/>
</dbReference>
<dbReference type="InterPro" id="IPR015424">
    <property type="entry name" value="PyrdxlP-dep_Trfase"/>
</dbReference>
<dbReference type="InterPro" id="IPR015421">
    <property type="entry name" value="PyrdxlP-dep_Trfase_major"/>
</dbReference>
<dbReference type="InterPro" id="IPR015422">
    <property type="entry name" value="PyrdxlP-dep_Trfase_small"/>
</dbReference>
<dbReference type="NCBIfam" id="TIGR01141">
    <property type="entry name" value="hisC"/>
    <property type="match status" value="1"/>
</dbReference>
<dbReference type="PANTHER" id="PTHR43643:SF3">
    <property type="entry name" value="HISTIDINOL-PHOSPHATE AMINOTRANSFERASE"/>
    <property type="match status" value="1"/>
</dbReference>
<dbReference type="PANTHER" id="PTHR43643">
    <property type="entry name" value="HISTIDINOL-PHOSPHATE AMINOTRANSFERASE 2"/>
    <property type="match status" value="1"/>
</dbReference>
<dbReference type="Pfam" id="PF00155">
    <property type="entry name" value="Aminotran_1_2"/>
    <property type="match status" value="1"/>
</dbReference>
<dbReference type="SUPFAM" id="SSF53383">
    <property type="entry name" value="PLP-dependent transferases"/>
    <property type="match status" value="1"/>
</dbReference>
<dbReference type="PROSITE" id="PS00599">
    <property type="entry name" value="AA_TRANSFER_CLASS_2"/>
    <property type="match status" value="1"/>
</dbReference>
<organism>
    <name type="scientific">Syntrophotalea carbinolica (strain DSM 2380 / NBRC 103641 / GraBd1)</name>
    <name type="common">Pelobacter carbinolicus</name>
    <dbReference type="NCBI Taxonomy" id="338963"/>
    <lineage>
        <taxon>Bacteria</taxon>
        <taxon>Pseudomonadati</taxon>
        <taxon>Thermodesulfobacteriota</taxon>
        <taxon>Desulfuromonadia</taxon>
        <taxon>Desulfuromonadales</taxon>
        <taxon>Syntrophotaleaceae</taxon>
        <taxon>Syntrophotalea</taxon>
    </lineage>
</organism>
<name>HIS8_SYNC1</name>
<reference key="1">
    <citation type="submission" date="2005-10" db="EMBL/GenBank/DDBJ databases">
        <title>Complete sequence of Pelobacter carbinolicus DSM 2380.</title>
        <authorList>
            <person name="Copeland A."/>
            <person name="Lucas S."/>
            <person name="Lapidus A."/>
            <person name="Barry K."/>
            <person name="Detter J.C."/>
            <person name="Glavina T."/>
            <person name="Hammon N."/>
            <person name="Israni S."/>
            <person name="Pitluck S."/>
            <person name="Chertkov O."/>
            <person name="Schmutz J."/>
            <person name="Larimer F."/>
            <person name="Land M."/>
            <person name="Kyrpides N."/>
            <person name="Ivanova N."/>
            <person name="Richardson P."/>
        </authorList>
    </citation>
    <scope>NUCLEOTIDE SEQUENCE [LARGE SCALE GENOMIC DNA]</scope>
    <source>
        <strain>DSM 2380 / NBRC 103641 / GraBd1</strain>
    </source>
</reference>
<proteinExistence type="inferred from homology"/>
<comment type="catalytic activity">
    <reaction evidence="1">
        <text>L-histidinol phosphate + 2-oxoglutarate = 3-(imidazol-4-yl)-2-oxopropyl phosphate + L-glutamate</text>
        <dbReference type="Rhea" id="RHEA:23744"/>
        <dbReference type="ChEBI" id="CHEBI:16810"/>
        <dbReference type="ChEBI" id="CHEBI:29985"/>
        <dbReference type="ChEBI" id="CHEBI:57766"/>
        <dbReference type="ChEBI" id="CHEBI:57980"/>
        <dbReference type="EC" id="2.6.1.9"/>
    </reaction>
</comment>
<comment type="cofactor">
    <cofactor evidence="1">
        <name>pyridoxal 5'-phosphate</name>
        <dbReference type="ChEBI" id="CHEBI:597326"/>
    </cofactor>
</comment>
<comment type="pathway">
    <text evidence="1">Amino-acid biosynthesis; L-histidine biosynthesis; L-histidine from 5-phospho-alpha-D-ribose 1-diphosphate: step 7/9.</text>
</comment>
<comment type="subunit">
    <text evidence="1">Homodimer.</text>
</comment>
<comment type="similarity">
    <text evidence="1">Belongs to the class-II pyridoxal-phosphate-dependent aminotransferase family. Histidinol-phosphate aminotransferase subfamily.</text>
</comment>
<evidence type="ECO:0000255" key="1">
    <source>
        <dbReference type="HAMAP-Rule" id="MF_01023"/>
    </source>
</evidence>
<accession>Q3A7R3</accession>
<keyword id="KW-0028">Amino-acid biosynthesis</keyword>
<keyword id="KW-0032">Aminotransferase</keyword>
<keyword id="KW-0368">Histidine biosynthesis</keyword>
<keyword id="KW-0663">Pyridoxal phosphate</keyword>
<keyword id="KW-1185">Reference proteome</keyword>
<keyword id="KW-0808">Transferase</keyword>
<sequence>MNPMRKNIAEMAGYVPGFQPRDEQNYTKLNTNENPYPPSPKVIEAILAEVGDNLRKYPDAASRAGCEEAGRLYGFDPDWVIMANGSDEVLNNLIRAFAGEGEEIAYVHPSYSYYSTLAEIQGAKVRTFLLDEGWALKDFPERYTGKLFFLTNPNAPLGFCYPQEFIEELAGRVDGMLVVDEAYADFAKENSLDLVRRLPNVVVTRTFSKSYSLAGMRLGLAIAHPEVIAALNKIRDHYNLDRLAQTACVAALADQEYFQQCVSKIRETRDWFSAELRVLDWDVIPSHGNFVFATPPDRNGKRVYDALFERRILVRYFSDPVLSHGLRISVGTREEMEKTLAALADIG</sequence>
<protein>
    <recommendedName>
        <fullName evidence="1">Histidinol-phosphate aminotransferase</fullName>
        <ecNumber evidence="1">2.6.1.9</ecNumber>
    </recommendedName>
    <alternativeName>
        <fullName evidence="1">Imidazole acetol-phosphate transaminase</fullName>
    </alternativeName>
</protein>
<gene>
    <name evidence="1" type="primary">hisC</name>
    <name type="ordered locus">Pcar_0321</name>
</gene>
<feature type="chain" id="PRO_0000153413" description="Histidinol-phosphate aminotransferase">
    <location>
        <begin position="1"/>
        <end position="347"/>
    </location>
</feature>
<feature type="modified residue" description="N6-(pyridoxal phosphate)lysine" evidence="1">
    <location>
        <position position="209"/>
    </location>
</feature>